<dbReference type="EC" id="3.5.1.5" evidence="1"/>
<dbReference type="EMBL" id="AE008917">
    <property type="protein sequence ID" value="AAL51828.1"/>
    <property type="molecule type" value="Genomic_DNA"/>
</dbReference>
<dbReference type="PIR" id="AI3332">
    <property type="entry name" value="AI3332"/>
</dbReference>
<dbReference type="RefSeq" id="WP_004683985.1">
    <property type="nucleotide sequence ID" value="NZ_GG703780.1"/>
</dbReference>
<dbReference type="SMR" id="Q8YHZ8"/>
<dbReference type="MEROPS" id="M38.982"/>
<dbReference type="GeneID" id="29593437"/>
<dbReference type="KEGG" id="bme:BMEI0647"/>
<dbReference type="KEGG" id="bmel:DK63_780"/>
<dbReference type="PATRIC" id="fig|224914.52.peg.817"/>
<dbReference type="eggNOG" id="COG0804">
    <property type="taxonomic scope" value="Bacteria"/>
</dbReference>
<dbReference type="PhylomeDB" id="Q8YHZ8"/>
<dbReference type="UniPathway" id="UPA00258">
    <property type="reaction ID" value="UER00370"/>
</dbReference>
<dbReference type="Proteomes" id="UP000000419">
    <property type="component" value="Chromosome I"/>
</dbReference>
<dbReference type="GO" id="GO:0005737">
    <property type="term" value="C:cytoplasm"/>
    <property type="evidence" value="ECO:0007669"/>
    <property type="project" value="UniProtKB-SubCell"/>
</dbReference>
<dbReference type="GO" id="GO:0016151">
    <property type="term" value="F:nickel cation binding"/>
    <property type="evidence" value="ECO:0007669"/>
    <property type="project" value="UniProtKB-UniRule"/>
</dbReference>
<dbReference type="GO" id="GO:0009039">
    <property type="term" value="F:urease activity"/>
    <property type="evidence" value="ECO:0007669"/>
    <property type="project" value="UniProtKB-UniRule"/>
</dbReference>
<dbReference type="GO" id="GO:0043419">
    <property type="term" value="P:urea catabolic process"/>
    <property type="evidence" value="ECO:0007669"/>
    <property type="project" value="UniProtKB-UniRule"/>
</dbReference>
<dbReference type="CDD" id="cd00375">
    <property type="entry name" value="Urease_alpha"/>
    <property type="match status" value="1"/>
</dbReference>
<dbReference type="Gene3D" id="3.20.20.140">
    <property type="entry name" value="Metal-dependent hydrolases"/>
    <property type="match status" value="1"/>
</dbReference>
<dbReference type="Gene3D" id="2.30.40.10">
    <property type="entry name" value="Urease, subunit C, domain 1"/>
    <property type="match status" value="1"/>
</dbReference>
<dbReference type="HAMAP" id="MF_01953">
    <property type="entry name" value="Urease_alpha"/>
    <property type="match status" value="1"/>
</dbReference>
<dbReference type="InterPro" id="IPR006680">
    <property type="entry name" value="Amidohydro-rel"/>
</dbReference>
<dbReference type="InterPro" id="IPR011059">
    <property type="entry name" value="Metal-dep_hydrolase_composite"/>
</dbReference>
<dbReference type="InterPro" id="IPR032466">
    <property type="entry name" value="Metal_Hydrolase"/>
</dbReference>
<dbReference type="InterPro" id="IPR001763">
    <property type="entry name" value="Rhodanese-like_dom"/>
</dbReference>
<dbReference type="InterPro" id="IPR011612">
    <property type="entry name" value="Urease_alpha_N_dom"/>
</dbReference>
<dbReference type="InterPro" id="IPR050112">
    <property type="entry name" value="Urease_alpha_subunit"/>
</dbReference>
<dbReference type="InterPro" id="IPR017950">
    <property type="entry name" value="Urease_AS"/>
</dbReference>
<dbReference type="InterPro" id="IPR005848">
    <property type="entry name" value="Urease_asu"/>
</dbReference>
<dbReference type="InterPro" id="IPR017951">
    <property type="entry name" value="Urease_asu_c"/>
</dbReference>
<dbReference type="InterPro" id="IPR029754">
    <property type="entry name" value="Urease_Ni-bd"/>
</dbReference>
<dbReference type="NCBIfam" id="NF009686">
    <property type="entry name" value="PRK13207.1"/>
    <property type="match status" value="1"/>
</dbReference>
<dbReference type="NCBIfam" id="NF009834">
    <property type="entry name" value="PRK13309.1"/>
    <property type="match status" value="1"/>
</dbReference>
<dbReference type="NCBIfam" id="TIGR01792">
    <property type="entry name" value="urease_alph"/>
    <property type="match status" value="1"/>
</dbReference>
<dbReference type="PANTHER" id="PTHR43440">
    <property type="entry name" value="UREASE"/>
    <property type="match status" value="1"/>
</dbReference>
<dbReference type="PANTHER" id="PTHR43440:SF1">
    <property type="entry name" value="UREASE"/>
    <property type="match status" value="1"/>
</dbReference>
<dbReference type="Pfam" id="PF01979">
    <property type="entry name" value="Amidohydro_1"/>
    <property type="match status" value="1"/>
</dbReference>
<dbReference type="Pfam" id="PF00449">
    <property type="entry name" value="Urease_alpha"/>
    <property type="match status" value="1"/>
</dbReference>
<dbReference type="PRINTS" id="PR01752">
    <property type="entry name" value="UREASE"/>
</dbReference>
<dbReference type="SUPFAM" id="SSF51338">
    <property type="entry name" value="Composite domain of metallo-dependent hydrolases"/>
    <property type="match status" value="2"/>
</dbReference>
<dbReference type="SUPFAM" id="SSF51556">
    <property type="entry name" value="Metallo-dependent hydrolases"/>
    <property type="match status" value="1"/>
</dbReference>
<dbReference type="PROSITE" id="PS01120">
    <property type="entry name" value="UREASE_1"/>
    <property type="match status" value="1"/>
</dbReference>
<dbReference type="PROSITE" id="PS00145">
    <property type="entry name" value="UREASE_2"/>
    <property type="match status" value="1"/>
</dbReference>
<dbReference type="PROSITE" id="PS51368">
    <property type="entry name" value="UREASE_3"/>
    <property type="match status" value="1"/>
</dbReference>
<comment type="catalytic activity">
    <reaction evidence="1">
        <text>urea + 2 H2O + H(+) = hydrogencarbonate + 2 NH4(+)</text>
        <dbReference type="Rhea" id="RHEA:20557"/>
        <dbReference type="ChEBI" id="CHEBI:15377"/>
        <dbReference type="ChEBI" id="CHEBI:15378"/>
        <dbReference type="ChEBI" id="CHEBI:16199"/>
        <dbReference type="ChEBI" id="CHEBI:17544"/>
        <dbReference type="ChEBI" id="CHEBI:28938"/>
        <dbReference type="EC" id="3.5.1.5"/>
    </reaction>
</comment>
<comment type="cofactor">
    <cofactor evidence="1">
        <name>Ni cation</name>
        <dbReference type="ChEBI" id="CHEBI:25516"/>
    </cofactor>
    <text evidence="1">Binds 2 nickel ions per subunit.</text>
</comment>
<comment type="pathway">
    <text evidence="1">Nitrogen metabolism; urea degradation; CO(2) and NH(3) from urea (urease route): step 1/1.</text>
</comment>
<comment type="subunit">
    <text evidence="1">Heterotrimer of UreA (gamma), UreB (beta) and UreC (alpha) subunits. Three heterotrimers associate to form the active enzyme.</text>
</comment>
<comment type="subcellular location">
    <subcellularLocation>
        <location evidence="1">Cytoplasm</location>
    </subcellularLocation>
</comment>
<comment type="PTM">
    <text evidence="1">Carboxylation allows a single lysine to coordinate two nickel ions.</text>
</comment>
<comment type="similarity">
    <text evidence="1">Belongs to the metallo-dependent hydrolases superfamily. Urease alpha subunit family.</text>
</comment>
<gene>
    <name evidence="1" type="primary">ureC2</name>
    <name type="ordered locus">BMEI0647</name>
</gene>
<name>URE12_BRUME</name>
<keyword id="KW-0963">Cytoplasm</keyword>
<keyword id="KW-0378">Hydrolase</keyword>
<keyword id="KW-0479">Metal-binding</keyword>
<keyword id="KW-0533">Nickel</keyword>
<evidence type="ECO:0000255" key="1">
    <source>
        <dbReference type="HAMAP-Rule" id="MF_01953"/>
    </source>
</evidence>
<organism>
    <name type="scientific">Brucella melitensis biotype 1 (strain ATCC 23456 / CCUG 17765 / NCTC 10094 / 16M)</name>
    <dbReference type="NCBI Taxonomy" id="224914"/>
    <lineage>
        <taxon>Bacteria</taxon>
        <taxon>Pseudomonadati</taxon>
        <taxon>Pseudomonadota</taxon>
        <taxon>Alphaproteobacteria</taxon>
        <taxon>Hyphomicrobiales</taxon>
        <taxon>Brucellaceae</taxon>
        <taxon>Brucella/Ochrobactrum group</taxon>
        <taxon>Brucella</taxon>
    </lineage>
</organism>
<reference key="1">
    <citation type="journal article" date="2002" name="Proc. Natl. Acad. Sci. U.S.A.">
        <title>The genome sequence of the facultative intracellular pathogen Brucella melitensis.</title>
        <authorList>
            <person name="DelVecchio V.G."/>
            <person name="Kapatral V."/>
            <person name="Redkar R.J."/>
            <person name="Patra G."/>
            <person name="Mujer C."/>
            <person name="Los T."/>
            <person name="Ivanova N."/>
            <person name="Anderson I."/>
            <person name="Bhattacharyya A."/>
            <person name="Lykidis A."/>
            <person name="Reznik G."/>
            <person name="Jablonski L."/>
            <person name="Larsen N."/>
            <person name="D'Souza M."/>
            <person name="Bernal A."/>
            <person name="Mazur M."/>
            <person name="Goltsman E."/>
            <person name="Selkov E."/>
            <person name="Elzer P.H."/>
            <person name="Hagius S."/>
            <person name="O'Callaghan D."/>
            <person name="Letesson J.-J."/>
            <person name="Haselkorn R."/>
            <person name="Kyrpides N.C."/>
            <person name="Overbeek R."/>
        </authorList>
    </citation>
    <scope>NUCLEOTIDE SEQUENCE [LARGE SCALE GENOMIC DNA]</scope>
    <source>
        <strain>ATCC 23456 / CCUG 17765 / NCTC 10094 / 16M</strain>
    </source>
</reference>
<protein>
    <recommendedName>
        <fullName evidence="1">Urease subunit alpha 2</fullName>
        <ecNumber evidence="1">3.5.1.5</ecNumber>
    </recommendedName>
    <alternativeName>
        <fullName evidence="1">Urea amidohydrolase subunit alpha 2</fullName>
    </alternativeName>
</protein>
<sequence length="573" mass="60785">MTQISRQQYADLYGPTIGDKIRLGDSDLYVEIEKDLRATYGDELQYGGGKTLRDGMGSENFLTQEAGCLDLVITNVTVIDAIQGVVKADVGIRNGRIVGLGKAGNPSTMDGVTRGLVTGASTDAISGEHLILTAGGMDTHVHYIAPQQVEAALSNGITTLWGGGIGPVDGTNGVTTTNGPWNLEMMLRSIEGLPINFGIQGKGNSTGIAPLIEQLEAGAAGFKVHEDYGATPATIRACLSVADEYDVSVAVHTDTLNESGYVEDTIAAFDGRSVHTYHSEGAGGGHAPDLLKVVGQNNILPSSTNPTLPCGKNSVAELFDMIMVCHNLNPRIPSDVAFAESRVRAETIVAESVLHDMGAISMIGSDSQAMGRIGETYLRAIQTADAMKKARGPLPEDAPGNDNFRVLRYIAKVTINPALTAGVGDVIGSIESGKFADLVLWEPAFFGVKPKLVLKGGLVAWANMGDPNASLPTPQPMYYRPMFAAYGSALQKTSITFVSRAAYDKGVADRFGLQRLVMPVSGTRVIGKAHMVRNSYLPNIEVDPQTFAVKVDGVHATVKPPQSISLNQLYFFS</sequence>
<proteinExistence type="inferred from homology"/>
<accession>Q8YHZ8</accession>
<feature type="chain" id="PRO_0000234144" description="Urease subunit alpha 2">
    <location>
        <begin position="1"/>
        <end position="573"/>
    </location>
</feature>
<feature type="domain" description="Urease" evidence="1">
    <location>
        <begin position="135"/>
        <end position="573"/>
    </location>
</feature>
<feature type="active site" description="Proton donor" evidence="1">
    <location>
        <position position="326"/>
    </location>
</feature>
<feature type="binding site" evidence="1">
    <location>
        <position position="140"/>
    </location>
    <ligand>
        <name>Ni(2+)</name>
        <dbReference type="ChEBI" id="CHEBI:49786"/>
        <label>1</label>
    </ligand>
</feature>
<feature type="binding site" evidence="1">
    <location>
        <position position="142"/>
    </location>
    <ligand>
        <name>Ni(2+)</name>
        <dbReference type="ChEBI" id="CHEBI:49786"/>
        <label>1</label>
    </ligand>
</feature>
<feature type="binding site" description="via carbamate group" evidence="1">
    <location>
        <position position="223"/>
    </location>
    <ligand>
        <name>Ni(2+)</name>
        <dbReference type="ChEBI" id="CHEBI:49786"/>
        <label>1</label>
    </ligand>
</feature>
<feature type="binding site" description="via carbamate group" evidence="1">
    <location>
        <position position="223"/>
    </location>
    <ligand>
        <name>Ni(2+)</name>
        <dbReference type="ChEBI" id="CHEBI:49786"/>
        <label>2</label>
    </ligand>
</feature>
<feature type="binding site" evidence="1">
    <location>
        <position position="225"/>
    </location>
    <ligand>
        <name>substrate</name>
    </ligand>
</feature>
<feature type="binding site" evidence="1">
    <location>
        <position position="252"/>
    </location>
    <ligand>
        <name>Ni(2+)</name>
        <dbReference type="ChEBI" id="CHEBI:49786"/>
        <label>2</label>
    </ligand>
</feature>
<feature type="binding site" evidence="1">
    <location>
        <position position="278"/>
    </location>
    <ligand>
        <name>Ni(2+)</name>
        <dbReference type="ChEBI" id="CHEBI:49786"/>
        <label>2</label>
    </ligand>
</feature>
<feature type="binding site" evidence="1">
    <location>
        <position position="366"/>
    </location>
    <ligand>
        <name>Ni(2+)</name>
        <dbReference type="ChEBI" id="CHEBI:49786"/>
        <label>1</label>
    </ligand>
</feature>
<feature type="modified residue" description="N6-carboxylysine" evidence="1">
    <location>
        <position position="223"/>
    </location>
</feature>